<name>FLGI2_YERPE</name>
<proteinExistence type="inferred from homology"/>
<keyword id="KW-0975">Bacterial flagellum</keyword>
<keyword id="KW-0574">Periplasm</keyword>
<keyword id="KW-1185">Reference proteome</keyword>
<keyword id="KW-0732">Signal</keyword>
<reference key="1">
    <citation type="journal article" date="2001" name="Nature">
        <title>Genome sequence of Yersinia pestis, the causative agent of plague.</title>
        <authorList>
            <person name="Parkhill J."/>
            <person name="Wren B.W."/>
            <person name="Thomson N.R."/>
            <person name="Titball R.W."/>
            <person name="Holden M.T.G."/>
            <person name="Prentice M.B."/>
            <person name="Sebaihia M."/>
            <person name="James K.D."/>
            <person name="Churcher C.M."/>
            <person name="Mungall K.L."/>
            <person name="Baker S."/>
            <person name="Basham D."/>
            <person name="Bentley S.D."/>
            <person name="Brooks K."/>
            <person name="Cerdeno-Tarraga A.-M."/>
            <person name="Chillingworth T."/>
            <person name="Cronin A."/>
            <person name="Davies R.M."/>
            <person name="Davis P."/>
            <person name="Dougan G."/>
            <person name="Feltwell T."/>
            <person name="Hamlin N."/>
            <person name="Holroyd S."/>
            <person name="Jagels K."/>
            <person name="Karlyshev A.V."/>
            <person name="Leather S."/>
            <person name="Moule S."/>
            <person name="Oyston P.C.F."/>
            <person name="Quail M.A."/>
            <person name="Rutherford K.M."/>
            <person name="Simmonds M."/>
            <person name="Skelton J."/>
            <person name="Stevens K."/>
            <person name="Whitehead S."/>
            <person name="Barrell B.G."/>
        </authorList>
    </citation>
    <scope>NUCLEOTIDE SEQUENCE [LARGE SCALE GENOMIC DNA]</scope>
    <source>
        <strain>CO-92 / Biovar Orientalis</strain>
    </source>
</reference>
<reference key="2">
    <citation type="journal article" date="2002" name="J. Bacteriol.">
        <title>Genome sequence of Yersinia pestis KIM.</title>
        <authorList>
            <person name="Deng W."/>
            <person name="Burland V."/>
            <person name="Plunkett G. III"/>
            <person name="Boutin A."/>
            <person name="Mayhew G.F."/>
            <person name="Liss P."/>
            <person name="Perna N.T."/>
            <person name="Rose D.J."/>
            <person name="Mau B."/>
            <person name="Zhou S."/>
            <person name="Schwartz D.C."/>
            <person name="Fetherston J.D."/>
            <person name="Lindler L.E."/>
            <person name="Brubaker R.R."/>
            <person name="Plano G.V."/>
            <person name="Straley S.C."/>
            <person name="McDonough K.A."/>
            <person name="Nilles M.L."/>
            <person name="Matson J.S."/>
            <person name="Blattner F.R."/>
            <person name="Perry R.D."/>
        </authorList>
    </citation>
    <scope>NUCLEOTIDE SEQUENCE [LARGE SCALE GENOMIC DNA]</scope>
    <source>
        <strain>KIM10+ / Biovar Mediaevalis</strain>
    </source>
</reference>
<reference key="3">
    <citation type="journal article" date="2004" name="DNA Res.">
        <title>Complete genome sequence of Yersinia pestis strain 91001, an isolate avirulent to humans.</title>
        <authorList>
            <person name="Song Y."/>
            <person name="Tong Z."/>
            <person name="Wang J."/>
            <person name="Wang L."/>
            <person name="Guo Z."/>
            <person name="Han Y."/>
            <person name="Zhang J."/>
            <person name="Pei D."/>
            <person name="Zhou D."/>
            <person name="Qin H."/>
            <person name="Pang X."/>
            <person name="Han Y."/>
            <person name="Zhai J."/>
            <person name="Li M."/>
            <person name="Cui B."/>
            <person name="Qi Z."/>
            <person name="Jin L."/>
            <person name="Dai R."/>
            <person name="Chen F."/>
            <person name="Li S."/>
            <person name="Ye C."/>
            <person name="Du Z."/>
            <person name="Lin W."/>
            <person name="Wang J."/>
            <person name="Yu J."/>
            <person name="Yang H."/>
            <person name="Wang J."/>
            <person name="Huang P."/>
            <person name="Yang R."/>
        </authorList>
    </citation>
    <scope>NUCLEOTIDE SEQUENCE [LARGE SCALE GENOMIC DNA]</scope>
    <source>
        <strain>91001 / Biovar Mediaevalis</strain>
    </source>
</reference>
<organism>
    <name type="scientific">Yersinia pestis</name>
    <dbReference type="NCBI Taxonomy" id="632"/>
    <lineage>
        <taxon>Bacteria</taxon>
        <taxon>Pseudomonadati</taxon>
        <taxon>Pseudomonadota</taxon>
        <taxon>Gammaproteobacteria</taxon>
        <taxon>Enterobacterales</taxon>
        <taxon>Yersiniaceae</taxon>
        <taxon>Yersinia</taxon>
    </lineage>
</organism>
<comment type="function">
    <text evidence="1">Assembles around the rod to form the L-ring and probably protects the motor/basal body from shearing forces during rotation.</text>
</comment>
<comment type="subunit">
    <text evidence="1">The basal body constitutes a major portion of the flagellar organelle and consists of four rings (L,P,S, and M) mounted on a central rod.</text>
</comment>
<comment type="subcellular location">
    <subcellularLocation>
        <location evidence="1">Periplasm</location>
    </subcellularLocation>
    <subcellularLocation>
        <location evidence="1">Bacterial flagellum basal body</location>
    </subcellularLocation>
</comment>
<comment type="similarity">
    <text evidence="1">Belongs to the FlgI family.</text>
</comment>
<dbReference type="EMBL" id="AL590842">
    <property type="protein sequence ID" value="CAL20446.1"/>
    <property type="molecule type" value="Genomic_DNA"/>
</dbReference>
<dbReference type="EMBL" id="AE009952">
    <property type="protein sequence ID" value="AAM86060.1"/>
    <property type="molecule type" value="Genomic_DNA"/>
</dbReference>
<dbReference type="EMBL" id="AE017042">
    <property type="protein sequence ID" value="AAS61821.1"/>
    <property type="molecule type" value="Genomic_DNA"/>
</dbReference>
<dbReference type="PIR" id="AC0220">
    <property type="entry name" value="AC0220"/>
</dbReference>
<dbReference type="RefSeq" id="WP_002211117.1">
    <property type="nucleotide sequence ID" value="NZ_WUCM01000106.1"/>
</dbReference>
<dbReference type="RefSeq" id="YP_002346801.1">
    <property type="nucleotide sequence ID" value="NC_003143.1"/>
</dbReference>
<dbReference type="SMR" id="Q8ZFB1"/>
<dbReference type="STRING" id="214092.YPO1806"/>
<dbReference type="PaxDb" id="214092-YPO1806"/>
<dbReference type="DNASU" id="1147450"/>
<dbReference type="EnsemblBacteria" id="AAS61821">
    <property type="protein sequence ID" value="AAS61821"/>
    <property type="gene ID" value="YP_1587"/>
</dbReference>
<dbReference type="KEGG" id="ype:YPO1806"/>
<dbReference type="KEGG" id="ypk:y2503"/>
<dbReference type="KEGG" id="ypm:YP_1587"/>
<dbReference type="PATRIC" id="fig|214092.21.peg.2167"/>
<dbReference type="eggNOG" id="COG1706">
    <property type="taxonomic scope" value="Bacteria"/>
</dbReference>
<dbReference type="HOGENOM" id="CLU_045235_1_0_6"/>
<dbReference type="OMA" id="LDTAHNT"/>
<dbReference type="OrthoDB" id="9786431at2"/>
<dbReference type="Proteomes" id="UP000000815">
    <property type="component" value="Chromosome"/>
</dbReference>
<dbReference type="Proteomes" id="UP000001019">
    <property type="component" value="Chromosome"/>
</dbReference>
<dbReference type="Proteomes" id="UP000002490">
    <property type="component" value="Chromosome"/>
</dbReference>
<dbReference type="GO" id="GO:0009428">
    <property type="term" value="C:bacterial-type flagellum basal body, distal rod, P ring"/>
    <property type="evidence" value="ECO:0000318"/>
    <property type="project" value="GO_Central"/>
</dbReference>
<dbReference type="GO" id="GO:0030288">
    <property type="term" value="C:outer membrane-bounded periplasmic space"/>
    <property type="evidence" value="ECO:0007669"/>
    <property type="project" value="InterPro"/>
</dbReference>
<dbReference type="GO" id="GO:0005198">
    <property type="term" value="F:structural molecule activity"/>
    <property type="evidence" value="ECO:0007669"/>
    <property type="project" value="InterPro"/>
</dbReference>
<dbReference type="GO" id="GO:0071973">
    <property type="term" value="P:bacterial-type flagellum-dependent cell motility"/>
    <property type="evidence" value="ECO:0000318"/>
    <property type="project" value="GO_Central"/>
</dbReference>
<dbReference type="HAMAP" id="MF_00416">
    <property type="entry name" value="FlgI"/>
    <property type="match status" value="1"/>
</dbReference>
<dbReference type="InterPro" id="IPR001782">
    <property type="entry name" value="Flag_FlgI"/>
</dbReference>
<dbReference type="NCBIfam" id="NF003676">
    <property type="entry name" value="PRK05303.1"/>
    <property type="match status" value="1"/>
</dbReference>
<dbReference type="PANTHER" id="PTHR30381">
    <property type="entry name" value="FLAGELLAR P-RING PERIPLASMIC PROTEIN FLGI"/>
    <property type="match status" value="1"/>
</dbReference>
<dbReference type="PANTHER" id="PTHR30381:SF0">
    <property type="entry name" value="FLAGELLAR P-RING PROTEIN"/>
    <property type="match status" value="1"/>
</dbReference>
<dbReference type="Pfam" id="PF02119">
    <property type="entry name" value="FlgI"/>
    <property type="match status" value="1"/>
</dbReference>
<dbReference type="PRINTS" id="PR01010">
    <property type="entry name" value="FLGPRINGFLGI"/>
</dbReference>
<accession>Q8ZFB1</accession>
<accession>Q0WFY7</accession>
<gene>
    <name evidence="1" type="primary">flgI2</name>
    <name type="ordered locus">YPO1806</name>
    <name type="ordered locus">y2503</name>
    <name type="ordered locus">YP_1587</name>
</gene>
<sequence>MRKQSLVTLLMVLLSLVWLPASAERIRDLVTVQGVRDNALIGYGLVVGLDGSGDQTMQTPFTTQSLSNMLSQLGITVPPGTNMQLKNVAAVMVTAKLPAFSRAGQTIDVVVSSMGNAKSIRGGTLLMTPLKGVDNQVYALAQGNVLVGGAGAAAGGSSVQVNQLAGGRISNGATIERELPTTFGTDGIINLQLNSEDFTLAQQVSDAINRQRGFGSATAIDARTIQVLVPRGGSSQVRFLADIQNIPINVDPGDAKVIINSRTGSVVMNRNVVLDSCAVAQGNLSVVVDKQNIVSQPDTPFGGGQTVVTPNTQISVQQQGGVLQRVNASPNLNNVVRALNSLGATPIDLMSILQAMESAGCLRAKLEII</sequence>
<protein>
    <recommendedName>
        <fullName evidence="1">Flagellar P-ring protein 2</fullName>
    </recommendedName>
    <alternativeName>
        <fullName evidence="1">Basal body P-ring protein 2</fullName>
    </alternativeName>
</protein>
<feature type="signal peptide" evidence="1">
    <location>
        <begin position="1"/>
        <end position="23"/>
    </location>
</feature>
<feature type="chain" id="PRO_0000009533" description="Flagellar P-ring protein 2">
    <location>
        <begin position="24"/>
        <end position="369"/>
    </location>
</feature>
<evidence type="ECO:0000255" key="1">
    <source>
        <dbReference type="HAMAP-Rule" id="MF_00416"/>
    </source>
</evidence>